<protein>
    <recommendedName>
        <fullName evidence="1">Sec-independent protein translocase protein TatA</fullName>
    </recommendedName>
</protein>
<proteinExistence type="inferred from homology"/>
<feature type="chain" id="PRO_1000044439" description="Sec-independent protein translocase protein TatA">
    <location>
        <begin position="1"/>
        <end position="79"/>
    </location>
</feature>
<feature type="transmembrane region" description="Helical" evidence="1">
    <location>
        <begin position="1"/>
        <end position="21"/>
    </location>
</feature>
<feature type="region of interest" description="Disordered" evidence="2">
    <location>
        <begin position="43"/>
        <end position="79"/>
    </location>
</feature>
<feature type="compositionally biased region" description="Basic and acidic residues" evidence="2">
    <location>
        <begin position="46"/>
        <end position="57"/>
    </location>
</feature>
<feature type="compositionally biased region" description="Low complexity" evidence="2">
    <location>
        <begin position="58"/>
        <end position="67"/>
    </location>
</feature>
<feature type="compositionally biased region" description="Basic and acidic residues" evidence="2">
    <location>
        <begin position="68"/>
        <end position="79"/>
    </location>
</feature>
<accession>A6WIE6</accession>
<name>TATA_SHEB8</name>
<reference key="1">
    <citation type="submission" date="2007-07" db="EMBL/GenBank/DDBJ databases">
        <title>Complete sequence of chromosome of Shewanella baltica OS185.</title>
        <authorList>
            <consortium name="US DOE Joint Genome Institute"/>
            <person name="Copeland A."/>
            <person name="Lucas S."/>
            <person name="Lapidus A."/>
            <person name="Barry K."/>
            <person name="Glavina del Rio T."/>
            <person name="Dalin E."/>
            <person name="Tice H."/>
            <person name="Pitluck S."/>
            <person name="Sims D."/>
            <person name="Brettin T."/>
            <person name="Bruce D."/>
            <person name="Detter J.C."/>
            <person name="Han C."/>
            <person name="Schmutz J."/>
            <person name="Larimer F."/>
            <person name="Land M."/>
            <person name="Hauser L."/>
            <person name="Kyrpides N."/>
            <person name="Mikhailova N."/>
            <person name="Brettar I."/>
            <person name="Rodrigues J."/>
            <person name="Konstantinidis K."/>
            <person name="Tiedje J."/>
            <person name="Richardson P."/>
        </authorList>
    </citation>
    <scope>NUCLEOTIDE SEQUENCE [LARGE SCALE GENOMIC DNA]</scope>
    <source>
        <strain>OS185</strain>
    </source>
</reference>
<evidence type="ECO:0000255" key="1">
    <source>
        <dbReference type="HAMAP-Rule" id="MF_00236"/>
    </source>
</evidence>
<evidence type="ECO:0000256" key="2">
    <source>
        <dbReference type="SAM" id="MobiDB-lite"/>
    </source>
</evidence>
<keyword id="KW-0997">Cell inner membrane</keyword>
<keyword id="KW-1003">Cell membrane</keyword>
<keyword id="KW-0472">Membrane</keyword>
<keyword id="KW-0653">Protein transport</keyword>
<keyword id="KW-0811">Translocation</keyword>
<keyword id="KW-0812">Transmembrane</keyword>
<keyword id="KW-1133">Transmembrane helix</keyword>
<keyword id="KW-0813">Transport</keyword>
<organism>
    <name type="scientific">Shewanella baltica (strain OS185)</name>
    <dbReference type="NCBI Taxonomy" id="402882"/>
    <lineage>
        <taxon>Bacteria</taxon>
        <taxon>Pseudomonadati</taxon>
        <taxon>Pseudomonadota</taxon>
        <taxon>Gammaproteobacteria</taxon>
        <taxon>Alteromonadales</taxon>
        <taxon>Shewanellaceae</taxon>
        <taxon>Shewanella</taxon>
    </lineage>
</organism>
<dbReference type="EMBL" id="CP000753">
    <property type="protein sequence ID" value="ABS06585.1"/>
    <property type="molecule type" value="Genomic_DNA"/>
</dbReference>
<dbReference type="RefSeq" id="WP_006083329.1">
    <property type="nucleotide sequence ID" value="NC_009665.1"/>
</dbReference>
<dbReference type="SMR" id="A6WIE6"/>
<dbReference type="GeneID" id="11770767"/>
<dbReference type="KEGG" id="sbm:Shew185_0416"/>
<dbReference type="HOGENOM" id="CLU_086034_5_1_6"/>
<dbReference type="GO" id="GO:0033281">
    <property type="term" value="C:TAT protein transport complex"/>
    <property type="evidence" value="ECO:0007669"/>
    <property type="project" value="UniProtKB-UniRule"/>
</dbReference>
<dbReference type="GO" id="GO:0008320">
    <property type="term" value="F:protein transmembrane transporter activity"/>
    <property type="evidence" value="ECO:0007669"/>
    <property type="project" value="UniProtKB-UniRule"/>
</dbReference>
<dbReference type="GO" id="GO:0043953">
    <property type="term" value="P:protein transport by the Tat complex"/>
    <property type="evidence" value="ECO:0007669"/>
    <property type="project" value="UniProtKB-UniRule"/>
</dbReference>
<dbReference type="Gene3D" id="1.20.5.3310">
    <property type="match status" value="1"/>
</dbReference>
<dbReference type="HAMAP" id="MF_00236">
    <property type="entry name" value="TatA_E"/>
    <property type="match status" value="1"/>
</dbReference>
<dbReference type="InterPro" id="IPR003369">
    <property type="entry name" value="TatA/B/E"/>
</dbReference>
<dbReference type="InterPro" id="IPR006312">
    <property type="entry name" value="TatA/E"/>
</dbReference>
<dbReference type="NCBIfam" id="NF002813">
    <property type="entry name" value="PRK02958.1"/>
    <property type="match status" value="1"/>
</dbReference>
<dbReference type="NCBIfam" id="TIGR01411">
    <property type="entry name" value="tatAE"/>
    <property type="match status" value="1"/>
</dbReference>
<dbReference type="PANTHER" id="PTHR42982">
    <property type="entry name" value="SEC-INDEPENDENT PROTEIN TRANSLOCASE PROTEIN TATA"/>
    <property type="match status" value="1"/>
</dbReference>
<dbReference type="PANTHER" id="PTHR42982:SF1">
    <property type="entry name" value="SEC-INDEPENDENT PROTEIN TRANSLOCASE PROTEIN TATA"/>
    <property type="match status" value="1"/>
</dbReference>
<dbReference type="Pfam" id="PF02416">
    <property type="entry name" value="TatA_B_E"/>
    <property type="match status" value="1"/>
</dbReference>
<sequence length="79" mass="8420">MGGISIWQLLIVALIVVLLFGTKKLRSLGGDLGGAVKGFKNAMSSEEDKKALEDTEAAKTAQTTQQATEKKPESNKEQA</sequence>
<comment type="function">
    <text evidence="1">Part of the twin-arginine translocation (Tat) system that transports large folded proteins containing a characteristic twin-arginine motif in their signal peptide across membranes. TatA could form the protein-conducting channel of the Tat system.</text>
</comment>
<comment type="subunit">
    <text evidence="1">The Tat system comprises two distinct complexes: a TatABC complex, containing multiple copies of TatA, TatB and TatC subunits, and a separate TatA complex, containing only TatA subunits. Substrates initially bind to the TatABC complex, which probably triggers association of the separate TatA complex to form the active translocon.</text>
</comment>
<comment type="subcellular location">
    <subcellularLocation>
        <location evidence="1">Cell inner membrane</location>
        <topology evidence="1">Single-pass membrane protein</topology>
    </subcellularLocation>
</comment>
<comment type="similarity">
    <text evidence="1">Belongs to the TatA/E family.</text>
</comment>
<gene>
    <name evidence="1" type="primary">tatA</name>
    <name type="ordered locus">Shew185_0416</name>
</gene>